<accession>Q58870</accession>
<proteinExistence type="predicted"/>
<protein>
    <recommendedName>
        <fullName>Uncharacterized protein MJ1475</fullName>
    </recommendedName>
</protein>
<keyword id="KW-1185">Reference proteome</keyword>
<name>Y1475_METJA</name>
<organism>
    <name type="scientific">Methanocaldococcus jannaschii (strain ATCC 43067 / DSM 2661 / JAL-1 / JCM 10045 / NBRC 100440)</name>
    <name type="common">Methanococcus jannaschii</name>
    <dbReference type="NCBI Taxonomy" id="243232"/>
    <lineage>
        <taxon>Archaea</taxon>
        <taxon>Methanobacteriati</taxon>
        <taxon>Methanobacteriota</taxon>
        <taxon>Methanomada group</taxon>
        <taxon>Methanococci</taxon>
        <taxon>Methanococcales</taxon>
        <taxon>Methanocaldococcaceae</taxon>
        <taxon>Methanocaldococcus</taxon>
    </lineage>
</organism>
<sequence>MKKLIAKTKEELIEKIKECENEEEIYINLELDRDVAIALLESCEPKKIYLPKSKYKRSSKKIIKALEGVDVEVIPIKAKTGRPTNVDKIIKKYLDKKPKEIAEITGINIKTVEYHYYKLKKKEKQ</sequence>
<feature type="chain" id="PRO_0000107358" description="Uncharacterized protein MJ1475">
    <location>
        <begin position="1"/>
        <end position="125"/>
    </location>
</feature>
<gene>
    <name type="ordered locus">MJ1475</name>
</gene>
<dbReference type="EMBL" id="L77117">
    <property type="protein sequence ID" value="AAB99488.1"/>
    <property type="molecule type" value="Genomic_DNA"/>
</dbReference>
<dbReference type="PIR" id="B64484">
    <property type="entry name" value="B64484"/>
</dbReference>
<dbReference type="RefSeq" id="WP_010870996.1">
    <property type="nucleotide sequence ID" value="NC_000909.1"/>
</dbReference>
<dbReference type="SMR" id="Q58870"/>
<dbReference type="STRING" id="243232.MJ_1475"/>
<dbReference type="PaxDb" id="243232-MJ_1475"/>
<dbReference type="EnsemblBacteria" id="AAB99488">
    <property type="protein sequence ID" value="AAB99488"/>
    <property type="gene ID" value="MJ_1475"/>
</dbReference>
<dbReference type="GeneID" id="1452380"/>
<dbReference type="KEGG" id="mja:MJ_1475"/>
<dbReference type="eggNOG" id="arCOG03351">
    <property type="taxonomic scope" value="Archaea"/>
</dbReference>
<dbReference type="HOGENOM" id="CLU_1976537_0_0_2"/>
<dbReference type="InParanoid" id="Q58870"/>
<dbReference type="Proteomes" id="UP000000805">
    <property type="component" value="Chromosome"/>
</dbReference>
<reference key="1">
    <citation type="journal article" date="1996" name="Science">
        <title>Complete genome sequence of the methanogenic archaeon, Methanococcus jannaschii.</title>
        <authorList>
            <person name="Bult C.J."/>
            <person name="White O."/>
            <person name="Olsen G.J."/>
            <person name="Zhou L."/>
            <person name="Fleischmann R.D."/>
            <person name="Sutton G.G."/>
            <person name="Blake J.A."/>
            <person name="FitzGerald L.M."/>
            <person name="Clayton R.A."/>
            <person name="Gocayne J.D."/>
            <person name="Kerlavage A.R."/>
            <person name="Dougherty B.A."/>
            <person name="Tomb J.-F."/>
            <person name="Adams M.D."/>
            <person name="Reich C.I."/>
            <person name="Overbeek R."/>
            <person name="Kirkness E.F."/>
            <person name="Weinstock K.G."/>
            <person name="Merrick J.M."/>
            <person name="Glodek A."/>
            <person name="Scott J.L."/>
            <person name="Geoghagen N.S.M."/>
            <person name="Weidman J.F."/>
            <person name="Fuhrmann J.L."/>
            <person name="Nguyen D."/>
            <person name="Utterback T.R."/>
            <person name="Kelley J.M."/>
            <person name="Peterson J.D."/>
            <person name="Sadow P.W."/>
            <person name="Hanna M.C."/>
            <person name="Cotton M.D."/>
            <person name="Roberts K.M."/>
            <person name="Hurst M.A."/>
            <person name="Kaine B.P."/>
            <person name="Borodovsky M."/>
            <person name="Klenk H.-P."/>
            <person name="Fraser C.M."/>
            <person name="Smith H.O."/>
            <person name="Woese C.R."/>
            <person name="Venter J.C."/>
        </authorList>
    </citation>
    <scope>NUCLEOTIDE SEQUENCE [LARGE SCALE GENOMIC DNA]</scope>
    <source>
        <strain>ATCC 43067 / DSM 2661 / JAL-1 / JCM 10045 / NBRC 100440</strain>
    </source>
</reference>